<organism>
    <name type="scientific">Arabidopsis thaliana</name>
    <name type="common">Mouse-ear cress</name>
    <dbReference type="NCBI Taxonomy" id="3702"/>
    <lineage>
        <taxon>Eukaryota</taxon>
        <taxon>Viridiplantae</taxon>
        <taxon>Streptophyta</taxon>
        <taxon>Embryophyta</taxon>
        <taxon>Tracheophyta</taxon>
        <taxon>Spermatophyta</taxon>
        <taxon>Magnoliopsida</taxon>
        <taxon>eudicotyledons</taxon>
        <taxon>Gunneridae</taxon>
        <taxon>Pentapetalae</taxon>
        <taxon>rosids</taxon>
        <taxon>malvids</taxon>
        <taxon>Brassicales</taxon>
        <taxon>Brassicaceae</taxon>
        <taxon>Camelineae</taxon>
        <taxon>Arabidopsis</taxon>
    </lineage>
</organism>
<name>LTG12_ARATH</name>
<dbReference type="EMBL" id="AB246330">
    <property type="protein sequence ID" value="BAE73267.1"/>
    <property type="molecule type" value="mRNA"/>
</dbReference>
<dbReference type="EMBL" id="AC005623">
    <property type="protein sequence ID" value="AAC77871.2"/>
    <property type="molecule type" value="Genomic_DNA"/>
</dbReference>
<dbReference type="EMBL" id="CP002685">
    <property type="protein sequence ID" value="AEC07941.1"/>
    <property type="molecule type" value="Genomic_DNA"/>
</dbReference>
<dbReference type="EMBL" id="AY088619">
    <property type="protein sequence ID" value="AAM67343.1"/>
    <property type="molecule type" value="mRNA"/>
</dbReference>
<dbReference type="EMBL" id="AK175860">
    <property type="protein sequence ID" value="BAD43623.1"/>
    <property type="molecule type" value="mRNA"/>
</dbReference>
<dbReference type="EMBL" id="AK175855">
    <property type="protein sequence ID" value="BAD43618.1"/>
    <property type="molecule type" value="mRNA"/>
</dbReference>
<dbReference type="EMBL" id="AK175830">
    <property type="protein sequence ID" value="BAD43593.1"/>
    <property type="molecule type" value="mRNA"/>
</dbReference>
<dbReference type="PIR" id="B84669">
    <property type="entry name" value="B84669"/>
</dbReference>
<dbReference type="RefSeq" id="NP_565637.1">
    <property type="nucleotide sequence ID" value="NM_128271.4"/>
</dbReference>
<dbReference type="FunCoup" id="Q9ZVC7">
    <property type="interactions" value="1"/>
</dbReference>
<dbReference type="STRING" id="3702.Q9ZVC7"/>
<dbReference type="GlyCosmos" id="Q9ZVC7">
    <property type="glycosylation" value="1 site, No reported glycans"/>
</dbReference>
<dbReference type="GlyGen" id="Q9ZVC7">
    <property type="glycosylation" value="1 site"/>
</dbReference>
<dbReference type="PaxDb" id="3702-AT2G27130.1"/>
<dbReference type="ProteomicsDB" id="242557"/>
<dbReference type="EnsemblPlants" id="AT2G27130.1">
    <property type="protein sequence ID" value="AT2G27130.1"/>
    <property type="gene ID" value="AT2G27130"/>
</dbReference>
<dbReference type="GeneID" id="817255"/>
<dbReference type="Gramene" id="AT2G27130.1">
    <property type="protein sequence ID" value="AT2G27130.1"/>
    <property type="gene ID" value="AT2G27130"/>
</dbReference>
<dbReference type="KEGG" id="ath:AT2G27130"/>
<dbReference type="Araport" id="AT2G27130"/>
<dbReference type="TAIR" id="AT2G27130">
    <property type="gene designation" value="LTPG12"/>
</dbReference>
<dbReference type="eggNOG" id="ENOG502S59X">
    <property type="taxonomic scope" value="Eukaryota"/>
</dbReference>
<dbReference type="HOGENOM" id="CLU_089796_5_2_1"/>
<dbReference type="InParanoid" id="Q9ZVC7"/>
<dbReference type="OMA" id="PMSESPM"/>
<dbReference type="PhylomeDB" id="Q9ZVC7"/>
<dbReference type="PRO" id="PR:Q9ZVC7"/>
<dbReference type="Proteomes" id="UP000006548">
    <property type="component" value="Chromosome 2"/>
</dbReference>
<dbReference type="ExpressionAtlas" id="Q9ZVC7">
    <property type="expression patterns" value="baseline and differential"/>
</dbReference>
<dbReference type="GO" id="GO:0005777">
    <property type="term" value="C:peroxisome"/>
    <property type="evidence" value="ECO:0007005"/>
    <property type="project" value="TAIR"/>
</dbReference>
<dbReference type="GO" id="GO:0005886">
    <property type="term" value="C:plasma membrane"/>
    <property type="evidence" value="ECO:0007669"/>
    <property type="project" value="UniProtKB-SubCell"/>
</dbReference>
<dbReference type="GO" id="GO:0098552">
    <property type="term" value="C:side of membrane"/>
    <property type="evidence" value="ECO:0007669"/>
    <property type="project" value="UniProtKB-KW"/>
</dbReference>
<dbReference type="CDD" id="cd00010">
    <property type="entry name" value="AAI_LTSS"/>
    <property type="match status" value="1"/>
</dbReference>
<dbReference type="FunFam" id="1.10.110.10:FF:000001">
    <property type="entry name" value="Bifunctional inhibitor/lipid-transfer protein/seed storage 2S albumin superfamily protein"/>
    <property type="match status" value="1"/>
</dbReference>
<dbReference type="Gene3D" id="1.10.110.10">
    <property type="entry name" value="Plant lipid-transfer and hydrophobic proteins"/>
    <property type="match status" value="1"/>
</dbReference>
<dbReference type="InterPro" id="IPR036312">
    <property type="entry name" value="Bifun_inhib/LTP/seed_sf"/>
</dbReference>
<dbReference type="InterPro" id="IPR016140">
    <property type="entry name" value="Bifunc_inhib/LTP/seed_store"/>
</dbReference>
<dbReference type="InterPro" id="IPR043325">
    <property type="entry name" value="LTSS"/>
</dbReference>
<dbReference type="PANTHER" id="PTHR33044">
    <property type="entry name" value="BIFUNCTIONAL INHIBITOR/LIPID-TRANSFER PROTEIN/SEED STORAGE 2S ALBUMIN SUPERFAMILY PROTEIN-RELATED"/>
    <property type="match status" value="1"/>
</dbReference>
<dbReference type="Pfam" id="PF14368">
    <property type="entry name" value="LTP_2"/>
    <property type="match status" value="1"/>
</dbReference>
<dbReference type="SMART" id="SM00499">
    <property type="entry name" value="AAI"/>
    <property type="match status" value="1"/>
</dbReference>
<dbReference type="SUPFAM" id="SSF47699">
    <property type="entry name" value="Bifunctional inhibitor/lipid-transfer protein/seed storage 2S albumin"/>
    <property type="match status" value="1"/>
</dbReference>
<keyword id="KW-1003">Cell membrane</keyword>
<keyword id="KW-1015">Disulfide bond</keyword>
<keyword id="KW-0325">Glycoprotein</keyword>
<keyword id="KW-0336">GPI-anchor</keyword>
<keyword id="KW-0449">Lipoprotein</keyword>
<keyword id="KW-0472">Membrane</keyword>
<keyword id="KW-1185">Reference proteome</keyword>
<keyword id="KW-0732">Signal</keyword>
<sequence length="176" mass="18089">MLTTNTLAVLLLLFLSLCSGQSPPAPEPIAADGPSSPVNCLVSMLNVSDCFSYVQVGSNEIKPEAACCPELAGMVQSSPECVCNLYGGGASPRFGVKLDKQRAEQLSTICGVKAPSPSLCSVLGFPTISPAGSEDSSSGSEGSDKDKKNGAMTTKYCGVALNSLALLLLFTFLSLS</sequence>
<reference key="1">
    <citation type="journal article" date="2011" name="Plant Cell Physiol.">
        <title>Expression and genome-wide analysis of the xylogen-type gene family.</title>
        <authorList>
            <person name="Kobayashi Y."/>
            <person name="Motose H."/>
            <person name="Iwamoto K."/>
            <person name="Fukuda H."/>
        </authorList>
    </citation>
    <scope>NUCLEOTIDE SEQUENCE [MRNA]</scope>
    <scope>TISSUE SPECIFICITY</scope>
    <scope>GENE FAMILY</scope>
    <scope>NOMENCLATURE</scope>
    <source>
        <strain>cv. Columbia</strain>
    </source>
</reference>
<reference key="2">
    <citation type="journal article" date="1999" name="Nature">
        <title>Sequence and analysis of chromosome 2 of the plant Arabidopsis thaliana.</title>
        <authorList>
            <person name="Lin X."/>
            <person name="Kaul S."/>
            <person name="Rounsley S.D."/>
            <person name="Shea T.P."/>
            <person name="Benito M.-I."/>
            <person name="Town C.D."/>
            <person name="Fujii C.Y."/>
            <person name="Mason T.M."/>
            <person name="Bowman C.L."/>
            <person name="Barnstead M.E."/>
            <person name="Feldblyum T.V."/>
            <person name="Buell C.R."/>
            <person name="Ketchum K.A."/>
            <person name="Lee J.J."/>
            <person name="Ronning C.M."/>
            <person name="Koo H.L."/>
            <person name="Moffat K.S."/>
            <person name="Cronin L.A."/>
            <person name="Shen M."/>
            <person name="Pai G."/>
            <person name="Van Aken S."/>
            <person name="Umayam L."/>
            <person name="Tallon L.J."/>
            <person name="Gill J.E."/>
            <person name="Adams M.D."/>
            <person name="Carrera A.J."/>
            <person name="Creasy T.H."/>
            <person name="Goodman H.M."/>
            <person name="Somerville C.R."/>
            <person name="Copenhaver G.P."/>
            <person name="Preuss D."/>
            <person name="Nierman W.C."/>
            <person name="White O."/>
            <person name="Eisen J.A."/>
            <person name="Salzberg S.L."/>
            <person name="Fraser C.M."/>
            <person name="Venter J.C."/>
        </authorList>
    </citation>
    <scope>NUCLEOTIDE SEQUENCE [LARGE SCALE GENOMIC DNA]</scope>
    <source>
        <strain>cv. Columbia</strain>
    </source>
</reference>
<reference key="3">
    <citation type="journal article" date="2017" name="Plant J.">
        <title>Araport11: a complete reannotation of the Arabidopsis thaliana reference genome.</title>
        <authorList>
            <person name="Cheng C.Y."/>
            <person name="Krishnakumar V."/>
            <person name="Chan A.P."/>
            <person name="Thibaud-Nissen F."/>
            <person name="Schobel S."/>
            <person name="Town C.D."/>
        </authorList>
    </citation>
    <scope>GENOME REANNOTATION</scope>
    <source>
        <strain>cv. Columbia</strain>
    </source>
</reference>
<reference key="4">
    <citation type="submission" date="2002-03" db="EMBL/GenBank/DDBJ databases">
        <title>Full-length cDNA from Arabidopsis thaliana.</title>
        <authorList>
            <person name="Brover V.V."/>
            <person name="Troukhan M.E."/>
            <person name="Alexandrov N.A."/>
            <person name="Lu Y.-P."/>
            <person name="Flavell R.B."/>
            <person name="Feldmann K.A."/>
        </authorList>
    </citation>
    <scope>NUCLEOTIDE SEQUENCE [LARGE SCALE MRNA]</scope>
</reference>
<reference key="5">
    <citation type="submission" date="2004-09" db="EMBL/GenBank/DDBJ databases">
        <title>Large-scale analysis of RIKEN Arabidopsis full-length (RAFL) cDNAs.</title>
        <authorList>
            <person name="Totoki Y."/>
            <person name="Seki M."/>
            <person name="Ishida J."/>
            <person name="Nakajima M."/>
            <person name="Enju A."/>
            <person name="Kamiya A."/>
            <person name="Narusaka M."/>
            <person name="Shin-i T."/>
            <person name="Nakagawa M."/>
            <person name="Sakamoto N."/>
            <person name="Oishi K."/>
            <person name="Kohara Y."/>
            <person name="Kobayashi M."/>
            <person name="Toyoda A."/>
            <person name="Sakaki Y."/>
            <person name="Sakurai T."/>
            <person name="Iida K."/>
            <person name="Akiyama K."/>
            <person name="Satou M."/>
            <person name="Toyoda T."/>
            <person name="Konagaya A."/>
            <person name="Carninci P."/>
            <person name="Kawai J."/>
            <person name="Hayashizaki Y."/>
            <person name="Shinozaki K."/>
        </authorList>
    </citation>
    <scope>NUCLEOTIDE SEQUENCE [LARGE SCALE MRNA]</scope>
    <source>
        <strain>cv. Columbia</strain>
    </source>
</reference>
<reference key="6">
    <citation type="journal article" date="2013" name="Plant Mol. Biol.">
        <title>Coexpression patterns indicate that GPI-anchored non-specific lipid transfer proteins are involved in accumulation of cuticular wax, suberin and sporopollenin.</title>
        <authorList>
            <person name="Edstam M.M."/>
            <person name="Blomqvist K."/>
            <person name="Ekloef A."/>
            <person name="Wennergren U."/>
            <person name="Edqvist J."/>
        </authorList>
    </citation>
    <scope>GENE FAMILY</scope>
    <scope>NOMENCLATURE</scope>
    <source>
        <strain>cv. Columbia</strain>
    </source>
</reference>
<protein>
    <recommendedName>
        <fullName evidence="7">Non-specific lipid transfer protein GPI-anchored 12</fullName>
        <shortName evidence="7">AtLTPG-12</shortName>
        <shortName evidence="7">Protein LTP-GPI-ANCHORED 12</shortName>
    </recommendedName>
    <alternativeName>
        <fullName evidence="6">Xylogen-like protein 13</fullName>
        <shortName evidence="6">AtXYLP13</shortName>
        <shortName evidence="6">AtXYP11</shortName>
    </alternativeName>
</protein>
<feature type="signal peptide" evidence="3">
    <location>
        <begin position="1"/>
        <end position="20"/>
    </location>
</feature>
<feature type="chain" id="PRO_0000259450" description="Non-specific lipid transfer protein GPI-anchored 12">
    <location>
        <begin position="21"/>
        <end position="149"/>
    </location>
</feature>
<feature type="propeptide" id="PRO_0000259451" description="Removed in mature form" evidence="3">
    <location>
        <begin position="150"/>
        <end position="176"/>
    </location>
</feature>
<feature type="lipid moiety-binding region" description="GPI-anchor amidated asparagine" evidence="3">
    <location>
        <position position="149"/>
    </location>
</feature>
<feature type="glycosylation site" description="N-linked (GlcNAc...) asparagine" evidence="4">
    <location>
        <position position="46"/>
    </location>
</feature>
<feature type="disulfide bond" evidence="1">
    <location>
        <begin position="40"/>
        <end position="83"/>
    </location>
</feature>
<feature type="disulfide bond" evidence="1">
    <location>
        <begin position="50"/>
        <end position="67"/>
    </location>
</feature>
<feature type="disulfide bond" evidence="1">
    <location>
        <begin position="68"/>
        <end position="110"/>
    </location>
</feature>
<feature type="disulfide bond" evidence="1">
    <location>
        <begin position="81"/>
        <end position="120"/>
    </location>
</feature>
<feature type="sequence conflict" description="In Ref. 4; AAM67343." evidence="8" ref="4">
    <original>L</original>
    <variation>LV</variation>
    <location>
        <position position="15"/>
    </location>
</feature>
<feature type="sequence conflict" description="In Ref. 4; AAM67343." evidence="8" ref="4">
    <original>V</original>
    <variation>T</variation>
    <location>
        <position position="38"/>
    </location>
</feature>
<feature type="sequence conflict" description="In Ref. 4; AAM67343." evidence="8" ref="4">
    <original>S</original>
    <variation>T</variation>
    <location>
        <position position="176"/>
    </location>
</feature>
<evidence type="ECO:0000250" key="1">
    <source>
        <dbReference type="UniProtKB" id="A0A0B4JDK1"/>
    </source>
</evidence>
<evidence type="ECO:0000250" key="2">
    <source>
        <dbReference type="UniProtKB" id="Q9C7F7"/>
    </source>
</evidence>
<evidence type="ECO:0000255" key="3"/>
<evidence type="ECO:0000255" key="4">
    <source>
        <dbReference type="PROSITE-ProRule" id="PRU00498"/>
    </source>
</evidence>
<evidence type="ECO:0000269" key="5">
    <source>
    </source>
</evidence>
<evidence type="ECO:0000303" key="6">
    <source>
    </source>
</evidence>
<evidence type="ECO:0000303" key="7">
    <source>
    </source>
</evidence>
<evidence type="ECO:0000305" key="8"/>
<evidence type="ECO:0000312" key="9">
    <source>
        <dbReference type="Araport" id="AT2G27130"/>
    </source>
</evidence>
<evidence type="ECO:0000312" key="10">
    <source>
        <dbReference type="EMBL" id="AAC77871.2"/>
    </source>
</evidence>
<comment type="function">
    <text evidence="2">Probable lipid transfer protein.</text>
</comment>
<comment type="subcellular location">
    <subcellularLocation>
        <location evidence="3">Cell membrane</location>
        <topology evidence="3">Lipid-anchor</topology>
        <topology evidence="3">GPI-anchor</topology>
    </subcellularLocation>
</comment>
<comment type="tissue specificity">
    <text evidence="5">Preferentially expressed in the endodermis of hypocotyls and roots of seedlings, and in petals and anthers of inflorescences (PubMed:21558309). May also be expressed in siliques, carpels and pedicels (PubMed:21558309).</text>
</comment>
<comment type="similarity">
    <text evidence="8">Belongs to the plant LTP family.</text>
</comment>
<proteinExistence type="evidence at transcript level"/>
<accession>Q9ZVC7</accession>
<accession>Q8L963</accession>
<gene>
    <name evidence="7" type="primary">LTPG12</name>
    <name evidence="6" type="synonym">XYLP13</name>
    <name evidence="6" type="synonym">XYP11</name>
    <name evidence="9" type="ordered locus">At2g27130</name>
    <name evidence="10" type="ORF">T20P8.18</name>
</gene>